<reference key="1">
    <citation type="journal article" date="2013" name="Nature">
        <title>The zebrafish reference genome sequence and its relationship to the human genome.</title>
        <authorList>
            <person name="Howe K."/>
            <person name="Clark M.D."/>
            <person name="Torroja C.F."/>
            <person name="Torrance J."/>
            <person name="Berthelot C."/>
            <person name="Muffato M."/>
            <person name="Collins J.E."/>
            <person name="Humphray S."/>
            <person name="McLaren K."/>
            <person name="Matthews L."/>
            <person name="McLaren S."/>
            <person name="Sealy I."/>
            <person name="Caccamo M."/>
            <person name="Churcher C."/>
            <person name="Scott C."/>
            <person name="Barrett J.C."/>
            <person name="Koch R."/>
            <person name="Rauch G.J."/>
            <person name="White S."/>
            <person name="Chow W."/>
            <person name="Kilian B."/>
            <person name="Quintais L.T."/>
            <person name="Guerra-Assuncao J.A."/>
            <person name="Zhou Y."/>
            <person name="Gu Y."/>
            <person name="Yen J."/>
            <person name="Vogel J.H."/>
            <person name="Eyre T."/>
            <person name="Redmond S."/>
            <person name="Banerjee R."/>
            <person name="Chi J."/>
            <person name="Fu B."/>
            <person name="Langley E."/>
            <person name="Maguire S.F."/>
            <person name="Laird G.K."/>
            <person name="Lloyd D."/>
            <person name="Kenyon E."/>
            <person name="Donaldson S."/>
            <person name="Sehra H."/>
            <person name="Almeida-King J."/>
            <person name="Loveland J."/>
            <person name="Trevanion S."/>
            <person name="Jones M."/>
            <person name="Quail M."/>
            <person name="Willey D."/>
            <person name="Hunt A."/>
            <person name="Burton J."/>
            <person name="Sims S."/>
            <person name="McLay K."/>
            <person name="Plumb B."/>
            <person name="Davis J."/>
            <person name="Clee C."/>
            <person name="Oliver K."/>
            <person name="Clark R."/>
            <person name="Riddle C."/>
            <person name="Elliot D."/>
            <person name="Threadgold G."/>
            <person name="Harden G."/>
            <person name="Ware D."/>
            <person name="Begum S."/>
            <person name="Mortimore B."/>
            <person name="Kerry G."/>
            <person name="Heath P."/>
            <person name="Phillimore B."/>
            <person name="Tracey A."/>
            <person name="Corby N."/>
            <person name="Dunn M."/>
            <person name="Johnson C."/>
            <person name="Wood J."/>
            <person name="Clark S."/>
            <person name="Pelan S."/>
            <person name="Griffiths G."/>
            <person name="Smith M."/>
            <person name="Glithero R."/>
            <person name="Howden P."/>
            <person name="Barker N."/>
            <person name="Lloyd C."/>
            <person name="Stevens C."/>
            <person name="Harley J."/>
            <person name="Holt K."/>
            <person name="Panagiotidis G."/>
            <person name="Lovell J."/>
            <person name="Beasley H."/>
            <person name="Henderson C."/>
            <person name="Gordon D."/>
            <person name="Auger K."/>
            <person name="Wright D."/>
            <person name="Collins J."/>
            <person name="Raisen C."/>
            <person name="Dyer L."/>
            <person name="Leung K."/>
            <person name="Robertson L."/>
            <person name="Ambridge K."/>
            <person name="Leongamornlert D."/>
            <person name="McGuire S."/>
            <person name="Gilderthorp R."/>
            <person name="Griffiths C."/>
            <person name="Manthravadi D."/>
            <person name="Nichol S."/>
            <person name="Barker G."/>
            <person name="Whitehead S."/>
            <person name="Kay M."/>
            <person name="Brown J."/>
            <person name="Murnane C."/>
            <person name="Gray E."/>
            <person name="Humphries M."/>
            <person name="Sycamore N."/>
            <person name="Barker D."/>
            <person name="Saunders D."/>
            <person name="Wallis J."/>
            <person name="Babbage A."/>
            <person name="Hammond S."/>
            <person name="Mashreghi-Mohammadi M."/>
            <person name="Barr L."/>
            <person name="Martin S."/>
            <person name="Wray P."/>
            <person name="Ellington A."/>
            <person name="Matthews N."/>
            <person name="Ellwood M."/>
            <person name="Woodmansey R."/>
            <person name="Clark G."/>
            <person name="Cooper J."/>
            <person name="Tromans A."/>
            <person name="Grafham D."/>
            <person name="Skuce C."/>
            <person name="Pandian R."/>
            <person name="Andrews R."/>
            <person name="Harrison E."/>
            <person name="Kimberley A."/>
            <person name="Garnett J."/>
            <person name="Fosker N."/>
            <person name="Hall R."/>
            <person name="Garner P."/>
            <person name="Kelly D."/>
            <person name="Bird C."/>
            <person name="Palmer S."/>
            <person name="Gehring I."/>
            <person name="Berger A."/>
            <person name="Dooley C.M."/>
            <person name="Ersan-Urun Z."/>
            <person name="Eser C."/>
            <person name="Geiger H."/>
            <person name="Geisler M."/>
            <person name="Karotki L."/>
            <person name="Kirn A."/>
            <person name="Konantz J."/>
            <person name="Konantz M."/>
            <person name="Oberlander M."/>
            <person name="Rudolph-Geiger S."/>
            <person name="Teucke M."/>
            <person name="Lanz C."/>
            <person name="Raddatz G."/>
            <person name="Osoegawa K."/>
            <person name="Zhu B."/>
            <person name="Rapp A."/>
            <person name="Widaa S."/>
            <person name="Langford C."/>
            <person name="Yang F."/>
            <person name="Schuster S.C."/>
            <person name="Carter N.P."/>
            <person name="Harrow J."/>
            <person name="Ning Z."/>
            <person name="Herrero J."/>
            <person name="Searle S.M."/>
            <person name="Enright A."/>
            <person name="Geisler R."/>
            <person name="Plasterk R.H."/>
            <person name="Lee C."/>
            <person name="Westerfield M."/>
            <person name="de Jong P.J."/>
            <person name="Zon L.I."/>
            <person name="Postlethwait J.H."/>
            <person name="Nusslein-Volhard C."/>
            <person name="Hubbard T.J."/>
            <person name="Roest Crollius H."/>
            <person name="Rogers J."/>
            <person name="Stemple D.L."/>
        </authorList>
    </citation>
    <scope>NUCLEOTIDE SEQUENCE [LARGE SCALE GENOMIC DNA]</scope>
    <source>
        <strain>Tuebingen</strain>
    </source>
</reference>
<evidence type="ECO:0000250" key="1">
    <source>
        <dbReference type="UniProtKB" id="K9UJK2"/>
    </source>
</evidence>
<evidence type="ECO:0000250" key="2">
    <source>
        <dbReference type="UniProtKB" id="Q9BSA9"/>
    </source>
</evidence>
<evidence type="ECO:0000255" key="3"/>
<evidence type="ECO:0000256" key="4">
    <source>
        <dbReference type="SAM" id="MobiDB-lite"/>
    </source>
</evidence>
<evidence type="ECO:0000303" key="5">
    <source>
    </source>
</evidence>
<evidence type="ECO:0000305" key="6"/>
<name>TM175_DANRE</name>
<sequence>MGENDESEIIEHHDDEEMEKRRPPRTHAQSFLESVASSVKEGHSSTQSSHRLLAYSDALISIIATVMILPVAHTKIQEDEELKQSIQALLTTKIAVYLMTFLIVTVAWAAHIRLFQVIERIDDTLALLNLACMMLITFLPYTFSLMATFPNNILGILLFCACVMVIGLIQALIVLYGFSHPFLLNDQIQMSENQAYYKQHILKVIMRVPIMCLFASIFSFIFFQLSYVLLAIVIFLPYISQCLKWIRSKAIGGQTDESPDSMPFYTYHPSEPLSKERVEAFSDGVFAIVATLLILDICEGNVPDPSVVKKKFDNSLIAALQEYGPEYLAYFGSFVTVGLLWFVHHSLFLHVTKATRLMGLFNTFSLAFVGGLPLAYQLTHESPRGSRNELEAVQISCVIIFFASLFQLAIWVTALFTERETLHPYVRYGGREHTFMLAKLSLYPCVALGTFFITCILSRFSAPIFHMMEICIPFAFLLLRLLVRVALALLRWLFCSARNDLERIPVEEEESRLPINDIVT</sequence>
<dbReference type="EMBL" id="BX927346">
    <property type="protein sequence ID" value="CAN87989.1"/>
    <property type="molecule type" value="Genomic_DNA"/>
</dbReference>
<dbReference type="RefSeq" id="NP_001093545.1">
    <property type="nucleotide sequence ID" value="NM_001100075.1"/>
</dbReference>
<dbReference type="SMR" id="A5PN43"/>
<dbReference type="FunCoup" id="A5PN43">
    <property type="interactions" value="1191"/>
</dbReference>
<dbReference type="STRING" id="7955.ENSDARP00000102863"/>
<dbReference type="PaxDb" id="7955-ENSDARP00000102863"/>
<dbReference type="Ensembl" id="ENSDART00000112728">
    <property type="protein sequence ID" value="ENSDARP00000102863"/>
    <property type="gene ID" value="ENSDARG00000076376"/>
</dbReference>
<dbReference type="GeneID" id="100002086"/>
<dbReference type="KEGG" id="dre:100002086"/>
<dbReference type="AGR" id="ZFIN:ZDB-GENE-070705-79"/>
<dbReference type="CTD" id="84286"/>
<dbReference type="ZFIN" id="ZDB-GENE-070705-79">
    <property type="gene designation" value="tmem175"/>
</dbReference>
<dbReference type="eggNOG" id="ENOG502QR5C">
    <property type="taxonomic scope" value="Eukaryota"/>
</dbReference>
<dbReference type="HOGENOM" id="CLU_052593_0_0_1"/>
<dbReference type="InParanoid" id="A5PN43"/>
<dbReference type="OMA" id="FFFPVSY"/>
<dbReference type="OrthoDB" id="203835at2759"/>
<dbReference type="PhylomeDB" id="A5PN43"/>
<dbReference type="TreeFam" id="TF328838"/>
<dbReference type="PRO" id="PR:A5PN43"/>
<dbReference type="Proteomes" id="UP000000437">
    <property type="component" value="Alternate scaffold 5"/>
</dbReference>
<dbReference type="Proteomes" id="UP000000437">
    <property type="component" value="Chromosome 5"/>
</dbReference>
<dbReference type="Bgee" id="ENSDARG00000076376">
    <property type="expression patterns" value="Expressed in brain and 20 other cell types or tissues"/>
</dbReference>
<dbReference type="GO" id="GO:0005768">
    <property type="term" value="C:endosome"/>
    <property type="evidence" value="ECO:0000250"/>
    <property type="project" value="UniProtKB"/>
</dbReference>
<dbReference type="GO" id="GO:0010008">
    <property type="term" value="C:endosome membrane"/>
    <property type="evidence" value="ECO:0000250"/>
    <property type="project" value="UniProtKB"/>
</dbReference>
<dbReference type="GO" id="GO:0005765">
    <property type="term" value="C:lysosomal membrane"/>
    <property type="evidence" value="ECO:0000250"/>
    <property type="project" value="UniProtKB"/>
</dbReference>
<dbReference type="GO" id="GO:0005764">
    <property type="term" value="C:lysosome"/>
    <property type="evidence" value="ECO:0000250"/>
    <property type="project" value="UniProtKB"/>
</dbReference>
<dbReference type="GO" id="GO:0050544">
    <property type="term" value="F:arachidonate binding"/>
    <property type="evidence" value="ECO:0000250"/>
    <property type="project" value="UniProtKB"/>
</dbReference>
<dbReference type="GO" id="GO:0005267">
    <property type="term" value="F:potassium channel activity"/>
    <property type="evidence" value="ECO:0000250"/>
    <property type="project" value="UniProtKB"/>
</dbReference>
<dbReference type="GO" id="GO:0022841">
    <property type="term" value="F:potassium ion leak channel activity"/>
    <property type="evidence" value="ECO:0000250"/>
    <property type="project" value="UniProtKB"/>
</dbReference>
<dbReference type="GO" id="GO:0015252">
    <property type="term" value="F:proton channel activity"/>
    <property type="evidence" value="ECO:0000250"/>
    <property type="project" value="UniProtKB"/>
</dbReference>
<dbReference type="GO" id="GO:0035752">
    <property type="term" value="P:lysosomal lumen pH elevation"/>
    <property type="evidence" value="ECO:0000250"/>
    <property type="project" value="UniProtKB"/>
</dbReference>
<dbReference type="GO" id="GO:0070050">
    <property type="term" value="P:neuron cellular homeostasis"/>
    <property type="evidence" value="ECO:0000250"/>
    <property type="project" value="UniProtKB"/>
</dbReference>
<dbReference type="GO" id="GO:0090385">
    <property type="term" value="P:phagosome-lysosome fusion"/>
    <property type="evidence" value="ECO:0000250"/>
    <property type="project" value="UniProtKB"/>
</dbReference>
<dbReference type="GO" id="GO:0071805">
    <property type="term" value="P:potassium ion transmembrane transport"/>
    <property type="evidence" value="ECO:0000250"/>
    <property type="project" value="UniProtKB"/>
</dbReference>
<dbReference type="GO" id="GO:1902600">
    <property type="term" value="P:proton transmembrane transport"/>
    <property type="evidence" value="ECO:0000250"/>
    <property type="project" value="UniProtKB"/>
</dbReference>
<dbReference type="GO" id="GO:0035751">
    <property type="term" value="P:regulation of lysosomal lumen pH"/>
    <property type="evidence" value="ECO:0000250"/>
    <property type="project" value="UniProtKB"/>
</dbReference>
<dbReference type="InterPro" id="IPR010617">
    <property type="entry name" value="TMEM175-like"/>
</dbReference>
<dbReference type="PANTHER" id="PTHR31462">
    <property type="entry name" value="ENDOSOMAL/LYSOSOMAL POTASSIUM CHANNEL TMEM175"/>
    <property type="match status" value="1"/>
</dbReference>
<dbReference type="PANTHER" id="PTHR31462:SF5">
    <property type="entry name" value="ENDOSOMAL_LYSOSOMAL PROTON CHANNEL TMEM175"/>
    <property type="match status" value="1"/>
</dbReference>
<dbReference type="Pfam" id="PF06736">
    <property type="entry name" value="TMEM175"/>
    <property type="match status" value="2"/>
</dbReference>
<proteinExistence type="inferred from homology"/>
<gene>
    <name evidence="2" type="primary">tmem175</name>
    <name evidence="5" type="ORF">si:ch211-168m18.2</name>
</gene>
<organism>
    <name type="scientific">Danio rerio</name>
    <name type="common">Zebrafish</name>
    <name type="synonym">Brachydanio rerio</name>
    <dbReference type="NCBI Taxonomy" id="7955"/>
    <lineage>
        <taxon>Eukaryota</taxon>
        <taxon>Metazoa</taxon>
        <taxon>Chordata</taxon>
        <taxon>Craniata</taxon>
        <taxon>Vertebrata</taxon>
        <taxon>Euteleostomi</taxon>
        <taxon>Actinopterygii</taxon>
        <taxon>Neopterygii</taxon>
        <taxon>Teleostei</taxon>
        <taxon>Ostariophysi</taxon>
        <taxon>Cypriniformes</taxon>
        <taxon>Danionidae</taxon>
        <taxon>Danioninae</taxon>
        <taxon>Danio</taxon>
    </lineage>
</organism>
<protein>
    <recommendedName>
        <fullName evidence="6">Endosomal/lysosomal proton channel TMEM175</fullName>
    </recommendedName>
    <alternativeName>
        <fullName evidence="6">Potassium channel TMEM175</fullName>
    </alternativeName>
    <alternativeName>
        <fullName evidence="2">Transmembrane protein 175</fullName>
    </alternativeName>
</protein>
<accession>A5PN43</accession>
<keyword id="KW-0967">Endosome</keyword>
<keyword id="KW-0407">Ion channel</keyword>
<keyword id="KW-0406">Ion transport</keyword>
<keyword id="KW-0458">Lysosome</keyword>
<keyword id="KW-0472">Membrane</keyword>
<keyword id="KW-0630">Potassium</keyword>
<keyword id="KW-0631">Potassium channel</keyword>
<keyword id="KW-0633">Potassium transport</keyword>
<keyword id="KW-1185">Reference proteome</keyword>
<keyword id="KW-0812">Transmembrane</keyword>
<keyword id="KW-1133">Transmembrane helix</keyword>
<keyword id="KW-0813">Transport</keyword>
<feature type="chain" id="PRO_0000360412" description="Endosomal/lysosomal proton channel TMEM175">
    <location>
        <begin position="1"/>
        <end position="520"/>
    </location>
</feature>
<feature type="topological domain" description="Cytoplasmic" evidence="2">
    <location>
        <begin position="1"/>
        <end position="49"/>
    </location>
</feature>
<feature type="transmembrane region" description="Helical; Name=TM1-1" evidence="2">
    <location>
        <begin position="50"/>
        <end position="72"/>
    </location>
</feature>
<feature type="topological domain" description="Lumenal" evidence="2">
    <location>
        <begin position="73"/>
        <end position="93"/>
    </location>
</feature>
<feature type="transmembrane region" description="Helical; Name=TM2-1" evidence="2">
    <location>
        <begin position="94"/>
        <end position="116"/>
    </location>
</feature>
<feature type="topological domain" description="Cytoplasmic" evidence="2">
    <location>
        <begin position="117"/>
        <end position="122"/>
    </location>
</feature>
<feature type="transmembrane region" description="Helical; Name=TM3-1" evidence="2">
    <location>
        <begin position="123"/>
        <end position="144"/>
    </location>
</feature>
<feature type="topological domain" description="Lumenal" evidence="2">
    <location>
        <begin position="145"/>
        <end position="154"/>
    </location>
</feature>
<feature type="transmembrane region" description="Helical; Name=TM4-1" evidence="2">
    <location>
        <begin position="155"/>
        <end position="176"/>
    </location>
</feature>
<feature type="topological domain" description="Cytoplasmic" evidence="2">
    <location>
        <begin position="177"/>
        <end position="200"/>
    </location>
</feature>
<feature type="transmembrane region" description="Helical; Name=TM5-1" evidence="3">
    <location>
        <begin position="201"/>
        <end position="221"/>
    </location>
</feature>
<feature type="transmembrane region" description="Helical; Name=TM6-1" evidence="3">
    <location>
        <begin position="222"/>
        <end position="242"/>
    </location>
</feature>
<feature type="topological domain" description="Cytoplasmic" evidence="2">
    <location>
        <begin position="243"/>
        <end position="274"/>
    </location>
</feature>
<feature type="transmembrane region" description="Helical; Name=TM1-2" evidence="2">
    <location>
        <begin position="275"/>
        <end position="299"/>
    </location>
</feature>
<feature type="topological domain" description="Lumenal" evidence="2">
    <location>
        <begin position="300"/>
        <end position="326"/>
    </location>
</feature>
<feature type="transmembrane region" description="Helical; Name=TM2-2" evidence="2">
    <location>
        <begin position="327"/>
        <end position="349"/>
    </location>
</feature>
<feature type="topological domain" description="Cytoplasmic" evidence="2">
    <location>
        <begin position="350"/>
        <end position="355"/>
    </location>
</feature>
<feature type="transmembrane region" description="Helical; Name=TM3-2" evidence="2">
    <location>
        <begin position="356"/>
        <end position="377"/>
    </location>
</feature>
<feature type="topological domain" description="Lumenal" evidence="2">
    <location>
        <begin position="378"/>
        <end position="392"/>
    </location>
</feature>
<feature type="transmembrane region" description="Helical; Name=TM4-2" evidence="2">
    <location>
        <begin position="393"/>
        <end position="413"/>
    </location>
</feature>
<feature type="topological domain" description="Cytoplasmic" evidence="2">
    <location>
        <begin position="414"/>
        <end position="433"/>
    </location>
</feature>
<feature type="transmembrane region" description="Helical; Name=TM5-2" evidence="2">
    <location>
        <begin position="434"/>
        <end position="457"/>
    </location>
</feature>
<feature type="topological domain" description="Lumenal" evidence="2">
    <location>
        <begin position="458"/>
        <end position="459"/>
    </location>
</feature>
<feature type="transmembrane region" description="Helical; Name=TM6-2" evidence="2">
    <location>
        <begin position="460"/>
        <end position="486"/>
    </location>
</feature>
<feature type="topological domain" description="Cytoplasmic" evidence="2">
    <location>
        <begin position="487"/>
        <end position="520"/>
    </location>
</feature>
<feature type="region of interest" description="Disordered" evidence="4">
    <location>
        <begin position="1"/>
        <end position="27"/>
    </location>
</feature>
<feature type="region of interest" description="Short helix H1-1" evidence="1">
    <location>
        <begin position="74"/>
        <end position="79"/>
    </location>
</feature>
<feature type="region of interest" description="Short helix H2-1" evidence="1">
    <location>
        <begin position="81"/>
        <end position="87"/>
    </location>
</feature>
<feature type="region of interest" description="Short helix H1-2" evidence="1">
    <location>
        <begin position="305"/>
        <end position="313"/>
    </location>
</feature>
<feature type="region of interest" description="Short helix H2-2" evidence="1">
    <location>
        <begin position="315"/>
        <end position="321"/>
    </location>
</feature>
<feature type="short sequence motif" description="RxxxFSD motif 1" evidence="2">
    <location>
        <begin position="51"/>
        <end position="57"/>
    </location>
</feature>
<feature type="short sequence motif" description="RxxxFSD motif 2" evidence="2">
    <location>
        <begin position="277"/>
        <end position="283"/>
    </location>
</feature>
<feature type="compositionally biased region" description="Basic and acidic residues" evidence="4">
    <location>
        <begin position="9"/>
        <end position="21"/>
    </location>
</feature>
<feature type="site" description="Hydrophobic filter residue 1-1" evidence="2">
    <location>
        <position position="62"/>
    </location>
</feature>
<feature type="site" description="Hydrophobic filter residue 2-1" evidence="1">
    <location>
        <position position="66"/>
    </location>
</feature>
<feature type="site" description="Hydrophobic filter residue 3-1" evidence="1">
    <location>
        <position position="69"/>
    </location>
</feature>
<feature type="site" description="Hydrophobic filter residue 1-2" evidence="2">
    <location>
        <position position="288"/>
    </location>
</feature>
<feature type="site" description="Hydrophobic filter residue 2-2" evidence="1">
    <location>
        <position position="292"/>
    </location>
</feature>
<feature type="site" description="Hydrophobic filter residue 3-2" evidence="1">
    <location>
        <position position="295"/>
    </location>
</feature>
<comment type="function">
    <text evidence="2">Proton-activated proton channel that catalyzes proton efflux from endosomes and lysosomes to maintain a steady-state pH. Activated at low pH (under pH 4.6) by luminal side protons: selectively mediates lysosomal proton release from lysosomes, eliciting a proton leak that balances V-ATPase activity to maintain pH homeostasis. Regulation of lumenal pH stability is required for autophagosome-lysosome fusion. Also acts as a potassium channel at higher pH, regulating potassium conductance in endosomes and lysosomes.</text>
</comment>
<comment type="catalytic activity">
    <reaction evidence="2">
        <text>H(+)(in) = H(+)(out)</text>
        <dbReference type="Rhea" id="RHEA:34979"/>
        <dbReference type="ChEBI" id="CHEBI:15378"/>
    </reaction>
</comment>
<comment type="catalytic activity">
    <reaction evidence="2">
        <text>K(+)(in) = K(+)(out)</text>
        <dbReference type="Rhea" id="RHEA:29463"/>
        <dbReference type="ChEBI" id="CHEBI:29103"/>
    </reaction>
</comment>
<comment type="activity regulation">
    <text evidence="2">Active at low pH (under pH 4.6): proton channel activity is activated by luminal side protons. Polyunsaturated fatty acids, such as arachidonic acid, also activate the channel activity.</text>
</comment>
<comment type="subunit">
    <text evidence="2">Homodimer.</text>
</comment>
<comment type="subcellular location">
    <subcellularLocation>
        <location evidence="2">Endosome membrane</location>
        <topology evidence="3">Multi-pass membrane protein</topology>
    </subcellularLocation>
    <subcellularLocation>
        <location evidence="2">Lysosome membrane</location>
        <topology evidence="3">Multi-pass membrane protein</topology>
    </subcellularLocation>
</comment>
<comment type="domain">
    <text evidence="2">Composed of two modules of six transmembranes, forming a homodimer with a tetrameric architecture. The six transmembrane regions of each module are tightly packed within each subunit without undergoing domain swapping. Forms a central ion-conduction pore lined by the side chains of the pore-lining helices. Conserved isoleucine residues (Ile-62 in the first module and Ile-288 in the second module) in the center of the pore serve as the gate in the closed conformation. In the widened channel in the open conformation, the same residues establish a constriction essential for potassium selectivity.</text>
</comment>
<comment type="similarity">
    <text evidence="6">Belongs to the TMEM175 family.</text>
</comment>